<name>NUOD2_RHIEC</name>
<feature type="chain" id="PRO_0000357893" description="NADH-quinone oxidoreductase subunit D 2">
    <location>
        <begin position="1"/>
        <end position="404"/>
    </location>
</feature>
<sequence>MTEVTELSRPEGEALNTREVLLNLGPQHPSTHGVLRLVLELDGEFVERVDPHIGYLHRGTEKLAESFTYTQIFPLTDRLDYLCPPSNNLAFALAVEKLLGIEAPIRAQYIRVMMAELARISGHLLITGALPMDLGAMTALLYVMREREMIMDLLEMITGARMHTSFCRVGGVREDLPDGFFPKIREFCDIFPNRIRDYERLLEDNRVFLNRTKGIGVISAEDAVDLGLSGPNLRASGVDWDIRRDEPYEIYDRLDFNVITRDEGDCYARWRCRVDEMRESMRIIEQCIDQMPEGPFQIDMPTIAFPLDKDRVHCSMEALIQHFDLSAYGFKVPKGEVYSAIEAPKGELGFYIISDGSPKPFRMKVRAPSFVNLQALFGVTNARYLADMIAVLGSLDPVMAEVDK</sequence>
<keyword id="KW-0997">Cell inner membrane</keyword>
<keyword id="KW-1003">Cell membrane</keyword>
<keyword id="KW-0472">Membrane</keyword>
<keyword id="KW-0520">NAD</keyword>
<keyword id="KW-0874">Quinone</keyword>
<keyword id="KW-1185">Reference proteome</keyword>
<keyword id="KW-1278">Translocase</keyword>
<keyword id="KW-0813">Transport</keyword>
<keyword id="KW-0830">Ubiquinone</keyword>
<accession>Q2K3U2</accession>
<gene>
    <name evidence="1" type="primary">nuoD2</name>
    <name type="ordered locus">RHE_CH03739</name>
</gene>
<proteinExistence type="inferred from homology"/>
<protein>
    <recommendedName>
        <fullName evidence="1">NADH-quinone oxidoreductase subunit D 2</fullName>
        <ecNumber evidence="1">7.1.1.-</ecNumber>
    </recommendedName>
    <alternativeName>
        <fullName evidence="1">NADH dehydrogenase I subunit D 2</fullName>
    </alternativeName>
    <alternativeName>
        <fullName evidence="1">NDH-1 subunit D 2</fullName>
    </alternativeName>
</protein>
<comment type="function">
    <text evidence="1">NDH-1 shuttles electrons from NADH, via FMN and iron-sulfur (Fe-S) centers, to quinones in the respiratory chain. The immediate electron acceptor for the enzyme in this species is believed to be ubiquinone. Couples the redox reaction to proton translocation (for every two electrons transferred, four hydrogen ions are translocated across the cytoplasmic membrane), and thus conserves the redox energy in a proton gradient.</text>
</comment>
<comment type="catalytic activity">
    <reaction evidence="1">
        <text>a quinone + NADH + 5 H(+)(in) = a quinol + NAD(+) + 4 H(+)(out)</text>
        <dbReference type="Rhea" id="RHEA:57888"/>
        <dbReference type="ChEBI" id="CHEBI:15378"/>
        <dbReference type="ChEBI" id="CHEBI:24646"/>
        <dbReference type="ChEBI" id="CHEBI:57540"/>
        <dbReference type="ChEBI" id="CHEBI:57945"/>
        <dbReference type="ChEBI" id="CHEBI:132124"/>
    </reaction>
</comment>
<comment type="subunit">
    <text evidence="1">NDH-1 is composed of 14 different subunits. Subunits NuoB, C, D, E, F, and G constitute the peripheral sector of the complex.</text>
</comment>
<comment type="subcellular location">
    <subcellularLocation>
        <location evidence="1">Cell inner membrane</location>
        <topology evidence="1">Peripheral membrane protein</topology>
        <orientation evidence="1">Cytoplasmic side</orientation>
    </subcellularLocation>
</comment>
<comment type="similarity">
    <text evidence="1">Belongs to the complex I 49 kDa subunit family.</text>
</comment>
<organism>
    <name type="scientific">Rhizobium etli (strain ATCC 51251 / DSM 11541 / JCM 21823 / NBRC 15573 / CFN 42)</name>
    <dbReference type="NCBI Taxonomy" id="347834"/>
    <lineage>
        <taxon>Bacteria</taxon>
        <taxon>Pseudomonadati</taxon>
        <taxon>Pseudomonadota</taxon>
        <taxon>Alphaproteobacteria</taxon>
        <taxon>Hyphomicrobiales</taxon>
        <taxon>Rhizobiaceae</taxon>
        <taxon>Rhizobium/Agrobacterium group</taxon>
        <taxon>Rhizobium</taxon>
    </lineage>
</organism>
<dbReference type="EC" id="7.1.1.-" evidence="1"/>
<dbReference type="EMBL" id="CP000133">
    <property type="protein sequence ID" value="ABC92494.1"/>
    <property type="molecule type" value="Genomic_DNA"/>
</dbReference>
<dbReference type="RefSeq" id="WP_011426946.1">
    <property type="nucleotide sequence ID" value="NC_007761.1"/>
</dbReference>
<dbReference type="SMR" id="Q2K3U2"/>
<dbReference type="KEGG" id="ret:RHE_CH03739"/>
<dbReference type="eggNOG" id="COG0649">
    <property type="taxonomic scope" value="Bacteria"/>
</dbReference>
<dbReference type="HOGENOM" id="CLU_015134_1_2_5"/>
<dbReference type="OrthoDB" id="9801496at2"/>
<dbReference type="Proteomes" id="UP000001936">
    <property type="component" value="Chromosome"/>
</dbReference>
<dbReference type="GO" id="GO:0005886">
    <property type="term" value="C:plasma membrane"/>
    <property type="evidence" value="ECO:0007669"/>
    <property type="project" value="UniProtKB-SubCell"/>
</dbReference>
<dbReference type="GO" id="GO:0051287">
    <property type="term" value="F:NAD binding"/>
    <property type="evidence" value="ECO:0007669"/>
    <property type="project" value="InterPro"/>
</dbReference>
<dbReference type="GO" id="GO:0050136">
    <property type="term" value="F:NADH:ubiquinone reductase (non-electrogenic) activity"/>
    <property type="evidence" value="ECO:0007669"/>
    <property type="project" value="UniProtKB-UniRule"/>
</dbReference>
<dbReference type="GO" id="GO:0048038">
    <property type="term" value="F:quinone binding"/>
    <property type="evidence" value="ECO:0007669"/>
    <property type="project" value="UniProtKB-KW"/>
</dbReference>
<dbReference type="Gene3D" id="1.10.645.10">
    <property type="entry name" value="Cytochrome-c3 Hydrogenase, chain B"/>
    <property type="match status" value="1"/>
</dbReference>
<dbReference type="HAMAP" id="MF_01358">
    <property type="entry name" value="NDH1_NuoD"/>
    <property type="match status" value="1"/>
</dbReference>
<dbReference type="InterPro" id="IPR001135">
    <property type="entry name" value="NADH_Q_OxRdtase_suD"/>
</dbReference>
<dbReference type="InterPro" id="IPR022885">
    <property type="entry name" value="NDH1_su_D/H"/>
</dbReference>
<dbReference type="InterPro" id="IPR029014">
    <property type="entry name" value="NiFe-Hase_large"/>
</dbReference>
<dbReference type="NCBIfam" id="TIGR01962">
    <property type="entry name" value="NuoD"/>
    <property type="match status" value="1"/>
</dbReference>
<dbReference type="NCBIfam" id="NF004739">
    <property type="entry name" value="PRK06075.1"/>
    <property type="match status" value="1"/>
</dbReference>
<dbReference type="PANTHER" id="PTHR11993:SF10">
    <property type="entry name" value="NADH DEHYDROGENASE [UBIQUINONE] IRON-SULFUR PROTEIN 2, MITOCHONDRIAL"/>
    <property type="match status" value="1"/>
</dbReference>
<dbReference type="PANTHER" id="PTHR11993">
    <property type="entry name" value="NADH-UBIQUINONE OXIDOREDUCTASE 49 KDA SUBUNIT"/>
    <property type="match status" value="1"/>
</dbReference>
<dbReference type="Pfam" id="PF00346">
    <property type="entry name" value="Complex1_49kDa"/>
    <property type="match status" value="1"/>
</dbReference>
<dbReference type="SUPFAM" id="SSF56762">
    <property type="entry name" value="HydB/Nqo4-like"/>
    <property type="match status" value="1"/>
</dbReference>
<evidence type="ECO:0000255" key="1">
    <source>
        <dbReference type="HAMAP-Rule" id="MF_01358"/>
    </source>
</evidence>
<reference key="1">
    <citation type="journal article" date="2006" name="Proc. Natl. Acad. Sci. U.S.A.">
        <title>The partitioned Rhizobium etli genome: genetic and metabolic redundancy in seven interacting replicons.</title>
        <authorList>
            <person name="Gonzalez V."/>
            <person name="Santamaria R.I."/>
            <person name="Bustos P."/>
            <person name="Hernandez-Gonzalez I."/>
            <person name="Medrano-Soto A."/>
            <person name="Moreno-Hagelsieb G."/>
            <person name="Janga S.C."/>
            <person name="Ramirez M.A."/>
            <person name="Jimenez-Jacinto V."/>
            <person name="Collado-Vides J."/>
            <person name="Davila G."/>
        </authorList>
    </citation>
    <scope>NUCLEOTIDE SEQUENCE [LARGE SCALE GENOMIC DNA]</scope>
    <source>
        <strain>ATCC 51251 / DSM 11541 / JCM 21823 / NBRC 15573 / CFN 42</strain>
    </source>
</reference>